<sequence length="124" mass="13241">MMSTATETMTDLDSIPPVMTLTQNAADKIASLIEEEGSDDLKLRVFVTGGGCSGFQYGFTFDENMNEGDTEVHQLGVSLLIDPMSYQYLVGAEIDYSEGLEGAQFVIKNPNATTTCGCGSSFSA</sequence>
<comment type="function">
    <text evidence="1">Required for insertion of 4Fe-4S clusters for at least IspG.</text>
</comment>
<comment type="cofactor">
    <cofactor evidence="1">
        <name>iron-sulfur cluster</name>
        <dbReference type="ChEBI" id="CHEBI:30408"/>
    </cofactor>
    <text evidence="1">Binds 1 iron-sulfur cluster per subunit.</text>
</comment>
<comment type="subunit">
    <text evidence="1">Homodimer.</text>
</comment>
<comment type="similarity">
    <text evidence="1">Belongs to the HesB/IscA family.</text>
</comment>
<accession>B5EQH0</accession>
<evidence type="ECO:0000255" key="1">
    <source>
        <dbReference type="HAMAP-Rule" id="MF_01380"/>
    </source>
</evidence>
<dbReference type="EMBL" id="CP001132">
    <property type="protein sequence ID" value="ACH84867.1"/>
    <property type="molecule type" value="Genomic_DNA"/>
</dbReference>
<dbReference type="SMR" id="B5EQH0"/>
<dbReference type="KEGG" id="afe:Lferr_2673"/>
<dbReference type="eggNOG" id="COG0316">
    <property type="taxonomic scope" value="Bacteria"/>
</dbReference>
<dbReference type="HOGENOM" id="CLU_069054_5_3_6"/>
<dbReference type="GO" id="GO:0051537">
    <property type="term" value="F:2 iron, 2 sulfur cluster binding"/>
    <property type="evidence" value="ECO:0007669"/>
    <property type="project" value="UniProtKB-ARBA"/>
</dbReference>
<dbReference type="GO" id="GO:0051539">
    <property type="term" value="F:4 iron, 4 sulfur cluster binding"/>
    <property type="evidence" value="ECO:0007669"/>
    <property type="project" value="TreeGrafter"/>
</dbReference>
<dbReference type="GO" id="GO:0005506">
    <property type="term" value="F:iron ion binding"/>
    <property type="evidence" value="ECO:0007669"/>
    <property type="project" value="TreeGrafter"/>
</dbReference>
<dbReference type="GO" id="GO:0016226">
    <property type="term" value="P:iron-sulfur cluster assembly"/>
    <property type="evidence" value="ECO:0007669"/>
    <property type="project" value="InterPro"/>
</dbReference>
<dbReference type="FunFam" id="2.60.300.12:FF:000002">
    <property type="entry name" value="Iron-sulfur cluster insertion protein ErpA"/>
    <property type="match status" value="1"/>
</dbReference>
<dbReference type="Gene3D" id="2.60.300.12">
    <property type="entry name" value="HesB-like domain"/>
    <property type="match status" value="1"/>
</dbReference>
<dbReference type="HAMAP" id="MF_01380">
    <property type="entry name" value="Fe_S_insert_ErpA"/>
    <property type="match status" value="1"/>
</dbReference>
<dbReference type="InterPro" id="IPR000361">
    <property type="entry name" value="FeS_biogenesis"/>
</dbReference>
<dbReference type="InterPro" id="IPR016092">
    <property type="entry name" value="FeS_cluster_insertion"/>
</dbReference>
<dbReference type="InterPro" id="IPR017870">
    <property type="entry name" value="FeS_cluster_insertion_CS"/>
</dbReference>
<dbReference type="InterPro" id="IPR023063">
    <property type="entry name" value="FeS_cluster_insertion_RrpA"/>
</dbReference>
<dbReference type="InterPro" id="IPR035903">
    <property type="entry name" value="HesB-like_dom_sf"/>
</dbReference>
<dbReference type="NCBIfam" id="TIGR00049">
    <property type="entry name" value="iron-sulfur cluster assembly accessory protein"/>
    <property type="match status" value="1"/>
</dbReference>
<dbReference type="NCBIfam" id="NF010147">
    <property type="entry name" value="PRK13623.1"/>
    <property type="match status" value="1"/>
</dbReference>
<dbReference type="PANTHER" id="PTHR43011">
    <property type="entry name" value="IRON-SULFUR CLUSTER ASSEMBLY 2 HOMOLOG, MITOCHONDRIAL"/>
    <property type="match status" value="1"/>
</dbReference>
<dbReference type="PANTHER" id="PTHR43011:SF1">
    <property type="entry name" value="IRON-SULFUR CLUSTER ASSEMBLY 2 HOMOLOG, MITOCHONDRIAL"/>
    <property type="match status" value="1"/>
</dbReference>
<dbReference type="Pfam" id="PF01521">
    <property type="entry name" value="Fe-S_biosyn"/>
    <property type="match status" value="1"/>
</dbReference>
<dbReference type="SUPFAM" id="SSF89360">
    <property type="entry name" value="HesB-like domain"/>
    <property type="match status" value="1"/>
</dbReference>
<dbReference type="PROSITE" id="PS01152">
    <property type="entry name" value="HESB"/>
    <property type="match status" value="1"/>
</dbReference>
<gene>
    <name evidence="1" type="primary">erpA</name>
    <name type="ordered locus">Lferr_2673</name>
</gene>
<protein>
    <recommendedName>
        <fullName evidence="1">Iron-sulfur cluster insertion protein ErpA</fullName>
    </recommendedName>
</protein>
<reference key="1">
    <citation type="submission" date="2008-08" db="EMBL/GenBank/DDBJ databases">
        <title>Complete sequence of Acidithiobacillus ferrooxidans ATCC 53993.</title>
        <authorList>
            <person name="Lucas S."/>
            <person name="Copeland A."/>
            <person name="Lapidus A."/>
            <person name="Glavina del Rio T."/>
            <person name="Dalin E."/>
            <person name="Tice H."/>
            <person name="Bruce D."/>
            <person name="Goodwin L."/>
            <person name="Pitluck S."/>
            <person name="Sims D."/>
            <person name="Brettin T."/>
            <person name="Detter J.C."/>
            <person name="Han C."/>
            <person name="Kuske C.R."/>
            <person name="Larimer F."/>
            <person name="Land M."/>
            <person name="Hauser L."/>
            <person name="Kyrpides N."/>
            <person name="Lykidis A."/>
            <person name="Borole A.P."/>
        </authorList>
    </citation>
    <scope>NUCLEOTIDE SEQUENCE [LARGE SCALE GENOMIC DNA]</scope>
    <source>
        <strain>ATCC 53993 / BNL-5-31</strain>
    </source>
</reference>
<proteinExistence type="inferred from homology"/>
<keyword id="KW-0408">Iron</keyword>
<keyword id="KW-0411">Iron-sulfur</keyword>
<keyword id="KW-0479">Metal-binding</keyword>
<name>ERPA_ACIF5</name>
<organism>
    <name type="scientific">Acidithiobacillus ferrooxidans (strain ATCC 53993 / BNL-5-31)</name>
    <name type="common">Leptospirillum ferrooxidans (ATCC 53993)</name>
    <dbReference type="NCBI Taxonomy" id="380394"/>
    <lineage>
        <taxon>Bacteria</taxon>
        <taxon>Pseudomonadati</taxon>
        <taxon>Pseudomonadota</taxon>
        <taxon>Acidithiobacillia</taxon>
        <taxon>Acidithiobacillales</taxon>
        <taxon>Acidithiobacillaceae</taxon>
        <taxon>Acidithiobacillus</taxon>
    </lineage>
</organism>
<feature type="chain" id="PRO_1000144891" description="Iron-sulfur cluster insertion protein ErpA">
    <location>
        <begin position="1"/>
        <end position="124"/>
    </location>
</feature>
<feature type="binding site" evidence="1">
    <location>
        <position position="52"/>
    </location>
    <ligand>
        <name>iron-sulfur cluster</name>
        <dbReference type="ChEBI" id="CHEBI:30408"/>
    </ligand>
</feature>
<feature type="binding site" evidence="1">
    <location>
        <position position="116"/>
    </location>
    <ligand>
        <name>iron-sulfur cluster</name>
        <dbReference type="ChEBI" id="CHEBI:30408"/>
    </ligand>
</feature>
<feature type="binding site" evidence="1">
    <location>
        <position position="118"/>
    </location>
    <ligand>
        <name>iron-sulfur cluster</name>
        <dbReference type="ChEBI" id="CHEBI:30408"/>
    </ligand>
</feature>